<proteinExistence type="inferred from homology"/>
<evidence type="ECO:0000255" key="1">
    <source>
        <dbReference type="HAMAP-Rule" id="MF_01424"/>
    </source>
</evidence>
<protein>
    <recommendedName>
        <fullName evidence="1">Multidrug resistance protein MdtC</fullName>
    </recommendedName>
    <alternativeName>
        <fullName evidence="1">Multidrug transporter MdtC</fullName>
    </alternativeName>
</protein>
<name>MDTC_KLEP3</name>
<reference key="1">
    <citation type="journal article" date="2008" name="PLoS Genet.">
        <title>Complete genome sequence of the N2-fixing broad host range endophyte Klebsiella pneumoniae 342 and virulence predictions verified in mice.</title>
        <authorList>
            <person name="Fouts D.E."/>
            <person name="Tyler H.L."/>
            <person name="DeBoy R.T."/>
            <person name="Daugherty S."/>
            <person name="Ren Q."/>
            <person name="Badger J.H."/>
            <person name="Durkin A.S."/>
            <person name="Huot H."/>
            <person name="Shrivastava S."/>
            <person name="Kothari S."/>
            <person name="Dodson R.J."/>
            <person name="Mohamoud Y."/>
            <person name="Khouri H."/>
            <person name="Roesch L.F.W."/>
            <person name="Krogfelt K.A."/>
            <person name="Struve C."/>
            <person name="Triplett E.W."/>
            <person name="Methe B.A."/>
        </authorList>
    </citation>
    <scope>NUCLEOTIDE SEQUENCE [LARGE SCALE GENOMIC DNA]</scope>
    <source>
        <strain>342</strain>
    </source>
</reference>
<comment type="subunit">
    <text evidence="1">Part of a tripartite efflux system composed of MdtA, MdtB and MdtC. MdtC forms a heteromultimer with MdtB.</text>
</comment>
<comment type="subcellular location">
    <subcellularLocation>
        <location evidence="1">Cell inner membrane</location>
        <topology evidence="1">Multi-pass membrane protein</topology>
    </subcellularLocation>
</comment>
<comment type="similarity">
    <text evidence="1">Belongs to the resistance-nodulation-cell division (RND) (TC 2.A.6) family. MdtC subfamily.</text>
</comment>
<accession>B5XPB8</accession>
<sequence>MKFFALFIYRPVATILISLAITLCGILGFRLLPVAPLPQVDFPVIMVSASLPGASPETMASSVATPLERSLGRIAGVNEMTSSSSLGSTRIILEFNFDRDINGAARDVQAAINAAQSLLPSGMPSRPTYRKANPSDAPIMILTLTSDTYSQGELYDFASTQLAQTIAQIDGVGDVDVGGSSLPAVRVDLNPQALFNQGVSLDAVRTAISDANVRKPQGALEDSAHRWQVQTNDELKTAADYQPLIVHYQNGAAVRLGDVATVSDSVQDVRNAGMTNAKPAILLMIRKLPEANIIQTVDSIRARLPELQQTIPAAIDLQIAQDRSPTIRASLEEVEQTLVISVALVILVVFLFLRSGRATLIPAVAVPVSLIGTFAAMYLCGFSLNNLSLMALTIATGFVVDDAIVVLENISRHLEAGMKPLQAALQGSREVGFTVLSMSLSLVAVFLPLLLMGGLPGRLLREFAVTLSVAIGISLAVSLTLTPMMCGWLLKSGKPHQPTRNRGFGRLLVAVQGGYGKSLKWVLRHSRLTGLVVLGTIALSVWLYISIPKTFFPEQDTGVLMGGIQADQSISFQAMRGKLQDFMKIIREDPAVDNVTGFTGGSRVNSGMMFITLKPRDQRHETAQQVIDRLRKKLANEPGANLFLMAVQDIRVGGRQSNASYQYTLLSDDLSALREWEPKIRKALAALPELADVNSDQQDNGAEMDLVYDRDTMSRLGISVQDANNLLNNAFGQRQISTIYQPLNQYKVVMEVDPAYTQDVSALDKMFVINSEGKPIPLAYFAKWQPANAPLSVNHQGLSAASTISFNLPTGRSLSEASDAINRTMTQLGVPSSVRGSFAGTAQVFQQTMNAQVILILAAIATVYIVLGMLYESYVHPLTILSTLPSAGVGALLALEIFDAPFSLIALIGIMLLIGIVKKNAIMMVDFALEAQRTGNLAPEEAIFQACLLRFRPIMMTTLAALFGALPLVLSGGDGSELRQPLGITIVGGLVMSQLLTLYTTPVVYLFFDRLRLRFSRHSSQPVSE</sequence>
<dbReference type="EMBL" id="CP000964">
    <property type="protein sequence ID" value="ACI06627.1"/>
    <property type="molecule type" value="Genomic_DNA"/>
</dbReference>
<dbReference type="SMR" id="B5XPB8"/>
<dbReference type="KEGG" id="kpe:KPK_1637"/>
<dbReference type="HOGENOM" id="CLU_002755_1_2_6"/>
<dbReference type="Proteomes" id="UP000001734">
    <property type="component" value="Chromosome"/>
</dbReference>
<dbReference type="GO" id="GO:0005886">
    <property type="term" value="C:plasma membrane"/>
    <property type="evidence" value="ECO:0007669"/>
    <property type="project" value="UniProtKB-SubCell"/>
</dbReference>
<dbReference type="GO" id="GO:0042910">
    <property type="term" value="F:xenobiotic transmembrane transporter activity"/>
    <property type="evidence" value="ECO:0007669"/>
    <property type="project" value="TreeGrafter"/>
</dbReference>
<dbReference type="FunFam" id="1.20.1640.10:FF:000001">
    <property type="entry name" value="Efflux pump membrane transporter"/>
    <property type="match status" value="1"/>
</dbReference>
<dbReference type="FunFam" id="3.30.70.1430:FF:000001">
    <property type="entry name" value="Efflux pump membrane transporter"/>
    <property type="match status" value="1"/>
</dbReference>
<dbReference type="FunFam" id="3.30.2090.10:FF:000004">
    <property type="entry name" value="Multidrug resistance protein MdtC"/>
    <property type="match status" value="1"/>
</dbReference>
<dbReference type="FunFam" id="3.30.2090.10:FF:000005">
    <property type="entry name" value="Multidrug resistance protein MdtC"/>
    <property type="match status" value="1"/>
</dbReference>
<dbReference type="FunFam" id="3.30.70.1430:FF:000004">
    <property type="entry name" value="Multidrug resistance protein MdtC"/>
    <property type="match status" value="1"/>
</dbReference>
<dbReference type="Gene3D" id="3.30.70.1430">
    <property type="entry name" value="Multidrug efflux transporter AcrB pore domain"/>
    <property type="match status" value="2"/>
</dbReference>
<dbReference type="Gene3D" id="3.30.70.1440">
    <property type="entry name" value="Multidrug efflux transporter AcrB pore domain"/>
    <property type="match status" value="1"/>
</dbReference>
<dbReference type="Gene3D" id="3.30.70.1320">
    <property type="entry name" value="Multidrug efflux transporter AcrB pore domain like"/>
    <property type="match status" value="1"/>
</dbReference>
<dbReference type="Gene3D" id="3.30.2090.10">
    <property type="entry name" value="Multidrug efflux transporter AcrB TolC docking domain, DN and DC subdomains"/>
    <property type="match status" value="2"/>
</dbReference>
<dbReference type="Gene3D" id="1.20.1640.10">
    <property type="entry name" value="Multidrug efflux transporter AcrB transmembrane domain"/>
    <property type="match status" value="2"/>
</dbReference>
<dbReference type="HAMAP" id="MF_01424">
    <property type="entry name" value="MdtC"/>
    <property type="match status" value="1"/>
</dbReference>
<dbReference type="InterPro" id="IPR027463">
    <property type="entry name" value="AcrB_DN_DC_subdom"/>
</dbReference>
<dbReference type="InterPro" id="IPR001036">
    <property type="entry name" value="Acrflvin-R"/>
</dbReference>
<dbReference type="InterPro" id="IPR023931">
    <property type="entry name" value="Multidrug-R_MdtC"/>
</dbReference>
<dbReference type="NCBIfam" id="NF007905">
    <property type="entry name" value="PRK10614.1"/>
    <property type="match status" value="1"/>
</dbReference>
<dbReference type="NCBIfam" id="NF033617">
    <property type="entry name" value="RND_permease_2"/>
    <property type="match status" value="1"/>
</dbReference>
<dbReference type="PANTHER" id="PTHR32063">
    <property type="match status" value="1"/>
</dbReference>
<dbReference type="PANTHER" id="PTHR32063:SF34">
    <property type="entry name" value="MULTIDRUG RESISTANCE PROTEIN MDTC"/>
    <property type="match status" value="1"/>
</dbReference>
<dbReference type="Pfam" id="PF00873">
    <property type="entry name" value="ACR_tran"/>
    <property type="match status" value="1"/>
</dbReference>
<dbReference type="PRINTS" id="PR00702">
    <property type="entry name" value="ACRIFLAVINRP"/>
</dbReference>
<dbReference type="SUPFAM" id="SSF82693">
    <property type="entry name" value="Multidrug efflux transporter AcrB pore domain, PN1, PN2, PC1 and PC2 subdomains"/>
    <property type="match status" value="4"/>
</dbReference>
<dbReference type="SUPFAM" id="SSF82714">
    <property type="entry name" value="Multidrug efflux transporter AcrB TolC docking domain, DN and DC subdomains"/>
    <property type="match status" value="2"/>
</dbReference>
<dbReference type="SUPFAM" id="SSF82866">
    <property type="entry name" value="Multidrug efflux transporter AcrB transmembrane domain"/>
    <property type="match status" value="2"/>
</dbReference>
<organism>
    <name type="scientific">Klebsiella pneumoniae (strain 342)</name>
    <dbReference type="NCBI Taxonomy" id="507522"/>
    <lineage>
        <taxon>Bacteria</taxon>
        <taxon>Pseudomonadati</taxon>
        <taxon>Pseudomonadota</taxon>
        <taxon>Gammaproteobacteria</taxon>
        <taxon>Enterobacterales</taxon>
        <taxon>Enterobacteriaceae</taxon>
        <taxon>Klebsiella/Raoultella group</taxon>
        <taxon>Klebsiella</taxon>
        <taxon>Klebsiella pneumoniae complex</taxon>
    </lineage>
</organism>
<feature type="chain" id="PRO_1000145676" description="Multidrug resistance protein MdtC">
    <location>
        <begin position="1"/>
        <end position="1025"/>
    </location>
</feature>
<feature type="transmembrane region" description="Helical" evidence="1">
    <location>
        <begin position="15"/>
        <end position="35"/>
    </location>
</feature>
<feature type="transmembrane region" description="Helical" evidence="1">
    <location>
        <begin position="333"/>
        <end position="353"/>
    </location>
</feature>
<feature type="transmembrane region" description="Helical" evidence="1">
    <location>
        <begin position="360"/>
        <end position="380"/>
    </location>
</feature>
<feature type="transmembrane region" description="Helical" evidence="1">
    <location>
        <begin position="387"/>
        <end position="407"/>
    </location>
</feature>
<feature type="transmembrane region" description="Helical" evidence="1">
    <location>
        <begin position="431"/>
        <end position="451"/>
    </location>
</feature>
<feature type="transmembrane region" description="Helical" evidence="1">
    <location>
        <begin position="469"/>
        <end position="489"/>
    </location>
</feature>
<feature type="transmembrane region" description="Helical" evidence="1">
    <location>
        <begin position="528"/>
        <end position="548"/>
    </location>
</feature>
<feature type="transmembrane region" description="Helical" evidence="1">
    <location>
        <begin position="851"/>
        <end position="871"/>
    </location>
</feature>
<feature type="transmembrane region" description="Helical" evidence="1">
    <location>
        <begin position="875"/>
        <end position="895"/>
    </location>
</feature>
<feature type="transmembrane region" description="Helical" evidence="1">
    <location>
        <begin position="897"/>
        <end position="917"/>
    </location>
</feature>
<feature type="transmembrane region" description="Helical" evidence="1">
    <location>
        <begin position="953"/>
        <end position="973"/>
    </location>
</feature>
<feature type="transmembrane region" description="Helical" evidence="1">
    <location>
        <begin position="984"/>
        <end position="1004"/>
    </location>
</feature>
<keyword id="KW-0997">Cell inner membrane</keyword>
<keyword id="KW-1003">Cell membrane</keyword>
<keyword id="KW-0472">Membrane</keyword>
<keyword id="KW-0812">Transmembrane</keyword>
<keyword id="KW-1133">Transmembrane helix</keyword>
<keyword id="KW-0813">Transport</keyword>
<gene>
    <name evidence="1" type="primary">mdtC</name>
    <name type="ordered locus">KPK_1637</name>
</gene>